<evidence type="ECO:0000255" key="1">
    <source>
        <dbReference type="HAMAP-Rule" id="MF_01306"/>
    </source>
</evidence>
<evidence type="ECO:0000305" key="2"/>
<keyword id="KW-0687">Ribonucleoprotein</keyword>
<keyword id="KW-0689">Ribosomal protein</keyword>
<keyword id="KW-0694">RNA-binding</keyword>
<keyword id="KW-0699">rRNA-binding</keyword>
<dbReference type="EMBL" id="CP000920">
    <property type="protein sequence ID" value="ACO20207.1"/>
    <property type="molecule type" value="Genomic_DNA"/>
</dbReference>
<dbReference type="RefSeq" id="WP_000092756.1">
    <property type="nucleotide sequence ID" value="NC_012467.1"/>
</dbReference>
<dbReference type="SMR" id="C1CHZ1"/>
<dbReference type="GeneID" id="93738707"/>
<dbReference type="KEGG" id="spp:SPP_0147"/>
<dbReference type="HOGENOM" id="CLU_092403_0_1_9"/>
<dbReference type="GO" id="GO:0015935">
    <property type="term" value="C:small ribosomal subunit"/>
    <property type="evidence" value="ECO:0007669"/>
    <property type="project" value="InterPro"/>
</dbReference>
<dbReference type="GO" id="GO:0019843">
    <property type="term" value="F:rRNA binding"/>
    <property type="evidence" value="ECO:0007669"/>
    <property type="project" value="UniProtKB-UniRule"/>
</dbReference>
<dbReference type="GO" id="GO:0003735">
    <property type="term" value="F:structural constituent of ribosome"/>
    <property type="evidence" value="ECO:0007669"/>
    <property type="project" value="InterPro"/>
</dbReference>
<dbReference type="GO" id="GO:0042274">
    <property type="term" value="P:ribosomal small subunit biogenesis"/>
    <property type="evidence" value="ECO:0007669"/>
    <property type="project" value="TreeGrafter"/>
</dbReference>
<dbReference type="GO" id="GO:0006412">
    <property type="term" value="P:translation"/>
    <property type="evidence" value="ECO:0007669"/>
    <property type="project" value="UniProtKB-UniRule"/>
</dbReference>
<dbReference type="CDD" id="cd00165">
    <property type="entry name" value="S4"/>
    <property type="match status" value="1"/>
</dbReference>
<dbReference type="FunFam" id="1.10.1050.10:FF:000001">
    <property type="entry name" value="30S ribosomal protein S4"/>
    <property type="match status" value="1"/>
</dbReference>
<dbReference type="FunFam" id="3.10.290.10:FF:000001">
    <property type="entry name" value="30S ribosomal protein S4"/>
    <property type="match status" value="1"/>
</dbReference>
<dbReference type="Gene3D" id="1.10.1050.10">
    <property type="entry name" value="Ribosomal Protein S4 Delta 41, Chain A, domain 1"/>
    <property type="match status" value="1"/>
</dbReference>
<dbReference type="Gene3D" id="3.10.290.10">
    <property type="entry name" value="RNA-binding S4 domain"/>
    <property type="match status" value="1"/>
</dbReference>
<dbReference type="HAMAP" id="MF_01306_B">
    <property type="entry name" value="Ribosomal_uS4_B"/>
    <property type="match status" value="1"/>
</dbReference>
<dbReference type="InterPro" id="IPR022801">
    <property type="entry name" value="Ribosomal_uS4"/>
</dbReference>
<dbReference type="InterPro" id="IPR005709">
    <property type="entry name" value="Ribosomal_uS4_bac-type"/>
</dbReference>
<dbReference type="InterPro" id="IPR018079">
    <property type="entry name" value="Ribosomal_uS4_CS"/>
</dbReference>
<dbReference type="InterPro" id="IPR001912">
    <property type="entry name" value="Ribosomal_uS4_N"/>
</dbReference>
<dbReference type="InterPro" id="IPR002942">
    <property type="entry name" value="S4_RNA-bd"/>
</dbReference>
<dbReference type="InterPro" id="IPR036986">
    <property type="entry name" value="S4_RNA-bd_sf"/>
</dbReference>
<dbReference type="NCBIfam" id="NF003717">
    <property type="entry name" value="PRK05327.1"/>
    <property type="match status" value="1"/>
</dbReference>
<dbReference type="NCBIfam" id="TIGR01017">
    <property type="entry name" value="rpsD_bact"/>
    <property type="match status" value="1"/>
</dbReference>
<dbReference type="PANTHER" id="PTHR11831">
    <property type="entry name" value="30S 40S RIBOSOMAL PROTEIN"/>
    <property type="match status" value="1"/>
</dbReference>
<dbReference type="PANTHER" id="PTHR11831:SF4">
    <property type="entry name" value="SMALL RIBOSOMAL SUBUNIT PROTEIN US4M"/>
    <property type="match status" value="1"/>
</dbReference>
<dbReference type="Pfam" id="PF00163">
    <property type="entry name" value="Ribosomal_S4"/>
    <property type="match status" value="1"/>
</dbReference>
<dbReference type="Pfam" id="PF01479">
    <property type="entry name" value="S4"/>
    <property type="match status" value="1"/>
</dbReference>
<dbReference type="SMART" id="SM01390">
    <property type="entry name" value="Ribosomal_S4"/>
    <property type="match status" value="1"/>
</dbReference>
<dbReference type="SMART" id="SM00363">
    <property type="entry name" value="S4"/>
    <property type="match status" value="1"/>
</dbReference>
<dbReference type="SUPFAM" id="SSF55174">
    <property type="entry name" value="Alpha-L RNA-binding motif"/>
    <property type="match status" value="1"/>
</dbReference>
<dbReference type="PROSITE" id="PS00632">
    <property type="entry name" value="RIBOSOMAL_S4"/>
    <property type="match status" value="1"/>
</dbReference>
<dbReference type="PROSITE" id="PS50889">
    <property type="entry name" value="S4"/>
    <property type="match status" value="1"/>
</dbReference>
<proteinExistence type="inferred from homology"/>
<feature type="chain" id="PRO_1000165430" description="Small ribosomal subunit protein uS4">
    <location>
        <begin position="1"/>
        <end position="203"/>
    </location>
</feature>
<feature type="domain" description="S4 RNA-binding" evidence="1">
    <location>
        <begin position="93"/>
        <end position="156"/>
    </location>
</feature>
<organism>
    <name type="scientific">Streptococcus pneumoniae (strain P1031)</name>
    <dbReference type="NCBI Taxonomy" id="488223"/>
    <lineage>
        <taxon>Bacteria</taxon>
        <taxon>Bacillati</taxon>
        <taxon>Bacillota</taxon>
        <taxon>Bacilli</taxon>
        <taxon>Lactobacillales</taxon>
        <taxon>Streptococcaceae</taxon>
        <taxon>Streptococcus</taxon>
    </lineage>
</organism>
<gene>
    <name evidence="1" type="primary">rpsD</name>
    <name type="ordered locus">SPP_0147</name>
</gene>
<name>RS4_STRZP</name>
<reference key="1">
    <citation type="journal article" date="2010" name="Genome Biol.">
        <title>Structure and dynamics of the pan-genome of Streptococcus pneumoniae and closely related species.</title>
        <authorList>
            <person name="Donati C."/>
            <person name="Hiller N.L."/>
            <person name="Tettelin H."/>
            <person name="Muzzi A."/>
            <person name="Croucher N.J."/>
            <person name="Angiuoli S.V."/>
            <person name="Oggioni M."/>
            <person name="Dunning Hotopp J.C."/>
            <person name="Hu F.Z."/>
            <person name="Riley D.R."/>
            <person name="Covacci A."/>
            <person name="Mitchell T.J."/>
            <person name="Bentley S.D."/>
            <person name="Kilian M."/>
            <person name="Ehrlich G.D."/>
            <person name="Rappuoli R."/>
            <person name="Moxon E.R."/>
            <person name="Masignani V."/>
        </authorList>
    </citation>
    <scope>NUCLEOTIDE SEQUENCE [LARGE SCALE GENOMIC DNA]</scope>
    <source>
        <strain>P1031</strain>
    </source>
</reference>
<sequence length="203" mass="23029">MSRYTGPSWKQARRLGLSLTGTGKELARRNYVPGQHGPNNRSKLSEYGLQLAEKQKLRFTYGVGEKQFRNLFVQATKIKGGILGFNFMLLLERRLDNVVYRLGLATTRRQARQFVNHGHILVDGKRVDIPSYRVTPGQVISVREKSLKVPAILEAVEATLGRPAFVSFDAEKLEGSLTRLPERDEINPEINEALVVEFYNKML</sequence>
<accession>C1CHZ1</accession>
<comment type="function">
    <text evidence="1">One of the primary rRNA binding proteins, it binds directly to 16S rRNA where it nucleates assembly of the body of the 30S subunit.</text>
</comment>
<comment type="function">
    <text evidence="1">With S5 and S12 plays an important role in translational accuracy.</text>
</comment>
<comment type="subunit">
    <text evidence="1">Part of the 30S ribosomal subunit. Contacts protein S5. The interaction surface between S4 and S5 is involved in control of translational fidelity.</text>
</comment>
<comment type="similarity">
    <text evidence="1">Belongs to the universal ribosomal protein uS4 family.</text>
</comment>
<protein>
    <recommendedName>
        <fullName evidence="1">Small ribosomal subunit protein uS4</fullName>
    </recommendedName>
    <alternativeName>
        <fullName evidence="2">30S ribosomal protein S4</fullName>
    </alternativeName>
</protein>